<comment type="cofactor">
    <cofactor evidence="1">
        <name>[4Fe-4S] cluster</name>
        <dbReference type="ChEBI" id="CHEBI:49883"/>
    </cofactor>
    <text evidence="1">Binds 1 [4Fe-4S] cluster. The cluster is coordinated with 3 cysteines and an exchangeable S-adenosyl-L-methionine.</text>
</comment>
<comment type="similarity">
    <text evidence="1">Belongs to the UPF0313 family.</text>
</comment>
<comment type="sequence caution" evidence="3">
    <conflict type="erroneous initiation">
        <sequence resource="EMBL-CDS" id="AAD35424"/>
    </conflict>
</comment>
<evidence type="ECO:0000255" key="1">
    <source>
        <dbReference type="HAMAP-Rule" id="MF_01251"/>
    </source>
</evidence>
<evidence type="ECO:0000255" key="2">
    <source>
        <dbReference type="PROSITE-ProRule" id="PRU01266"/>
    </source>
</evidence>
<evidence type="ECO:0000305" key="3"/>
<name>Y337_THEMA</name>
<sequence>MFLPTTREEMRKLGWKELDIILVTGDAYVDHPSFGVAFIGHYLVSHGFKVGIIAQPDWRTEKDITRLGRPRLFFGVTAGNVDSMVANYTASKKKRKTDDYTPGGIGGKRPDRATIVYTNLIKRFFPEVPVVLGGLEASLRRFAHYDWWSDRVRKSVLVDSKADLLVYGMGEKAVLGIAQILSRTGDIEKCKSIRGVVWWASQKPEEGIELPSYDEISENPEKYAEALKLQTWYTDPYKNIPIYQRQDTRYVVQNPPQPPLSQEELDRLYLLPFEREVHPFYAKMGKVKAIETVKFSITAVRGCFGNCSFCALTQHQTTHVSYRSKDSILEEVRILTKKKDFKGTITDVGGPTANLYGSGCSIRETKGQCQKFCLYPIVCKVVRPNHDEFISLLESIRQIPGVRNVFVSSGIRHDFVFAEKDPDVFIRELVKYTPGQLKLAPEHAHPKVLSLMRKPPVELFLEFKKRFETLAKKMGKRKYVIGYFIVGHPGEGWRENNYLRDFILKHLGYFPQQIQIFTPTPGTVSTAMYYSGVDPFTGEKVHVERSLKVRNKMKENVLFKKKGREKR</sequence>
<gene>
    <name type="ordered locus">TM_0337</name>
</gene>
<dbReference type="EMBL" id="AE000512">
    <property type="protein sequence ID" value="AAD35424.1"/>
    <property type="status" value="ALT_INIT"/>
    <property type="molecule type" value="Genomic_DNA"/>
</dbReference>
<dbReference type="PIR" id="C72391">
    <property type="entry name" value="C72391"/>
</dbReference>
<dbReference type="RefSeq" id="NP_228148.1">
    <property type="nucleotide sequence ID" value="NC_000853.1"/>
</dbReference>
<dbReference type="RefSeq" id="WP_004083105.1">
    <property type="nucleotide sequence ID" value="NZ_CP011107.1"/>
</dbReference>
<dbReference type="STRING" id="243274.TM_0337"/>
<dbReference type="PaxDb" id="243274-THEMA_03035"/>
<dbReference type="EnsemblBacteria" id="AAD35424">
    <property type="protein sequence ID" value="AAD35424"/>
    <property type="gene ID" value="TM_0337"/>
</dbReference>
<dbReference type="KEGG" id="tma:TM0337"/>
<dbReference type="KEGG" id="tmi:THEMA_03035"/>
<dbReference type="KEGG" id="tmm:Tmari_0335"/>
<dbReference type="KEGG" id="tmw:THMA_0345"/>
<dbReference type="PATRIC" id="fig|243274.5.peg.342"/>
<dbReference type="eggNOG" id="COG1032">
    <property type="taxonomic scope" value="Bacteria"/>
</dbReference>
<dbReference type="InParanoid" id="Q9WYH2"/>
<dbReference type="OrthoDB" id="9803479at2"/>
<dbReference type="Proteomes" id="UP000008183">
    <property type="component" value="Chromosome"/>
</dbReference>
<dbReference type="GO" id="GO:0051539">
    <property type="term" value="F:4 iron, 4 sulfur cluster binding"/>
    <property type="evidence" value="ECO:0007669"/>
    <property type="project" value="UniProtKB-KW"/>
</dbReference>
<dbReference type="GO" id="GO:0003824">
    <property type="term" value="F:catalytic activity"/>
    <property type="evidence" value="ECO:0007669"/>
    <property type="project" value="InterPro"/>
</dbReference>
<dbReference type="GO" id="GO:0005506">
    <property type="term" value="F:iron ion binding"/>
    <property type="evidence" value="ECO:0007669"/>
    <property type="project" value="UniProtKB-UniRule"/>
</dbReference>
<dbReference type="CDD" id="cd01335">
    <property type="entry name" value="Radical_SAM"/>
    <property type="match status" value="1"/>
</dbReference>
<dbReference type="Gene3D" id="3.80.30.20">
    <property type="entry name" value="tm_1862 like domain"/>
    <property type="match status" value="1"/>
</dbReference>
<dbReference type="HAMAP" id="MF_01251">
    <property type="entry name" value="UPF0313"/>
    <property type="match status" value="1"/>
</dbReference>
<dbReference type="InterPro" id="IPR006638">
    <property type="entry name" value="Elp3/MiaA/NifB-like_rSAM"/>
</dbReference>
<dbReference type="InterPro" id="IPR007197">
    <property type="entry name" value="rSAM"/>
</dbReference>
<dbReference type="InterPro" id="IPR023404">
    <property type="entry name" value="rSAM_horseshoe"/>
</dbReference>
<dbReference type="InterPro" id="IPR022946">
    <property type="entry name" value="UPF0313"/>
</dbReference>
<dbReference type="InterPro" id="IPR024560">
    <property type="entry name" value="UPF0313_C"/>
</dbReference>
<dbReference type="InterPro" id="IPR013704">
    <property type="entry name" value="UPF0313_N"/>
</dbReference>
<dbReference type="NCBIfam" id="TIGR03904">
    <property type="entry name" value="SAM_YgiQ"/>
    <property type="match status" value="1"/>
</dbReference>
<dbReference type="PANTHER" id="PTHR32331">
    <property type="entry name" value="UPF0313 PROTEIN YGIQ"/>
    <property type="match status" value="1"/>
</dbReference>
<dbReference type="PANTHER" id="PTHR32331:SF0">
    <property type="entry name" value="UPF0313 PROTEIN YGIQ"/>
    <property type="match status" value="1"/>
</dbReference>
<dbReference type="Pfam" id="PF11842">
    <property type="entry name" value="DUF3362"/>
    <property type="match status" value="1"/>
</dbReference>
<dbReference type="Pfam" id="PF04055">
    <property type="entry name" value="Radical_SAM"/>
    <property type="match status" value="1"/>
</dbReference>
<dbReference type="Pfam" id="PF08497">
    <property type="entry name" value="Radical_SAM_N"/>
    <property type="match status" value="1"/>
</dbReference>
<dbReference type="SFLD" id="SFLDG01082">
    <property type="entry name" value="B12-binding_domain_containing"/>
    <property type="match status" value="1"/>
</dbReference>
<dbReference type="SFLD" id="SFLDS00029">
    <property type="entry name" value="Radical_SAM"/>
    <property type="match status" value="1"/>
</dbReference>
<dbReference type="SFLD" id="SFLDG01069">
    <property type="entry name" value="UPF0313"/>
    <property type="match status" value="1"/>
</dbReference>
<dbReference type="SMART" id="SM00729">
    <property type="entry name" value="Elp3"/>
    <property type="match status" value="1"/>
</dbReference>
<dbReference type="SUPFAM" id="SSF102114">
    <property type="entry name" value="Radical SAM enzymes"/>
    <property type="match status" value="1"/>
</dbReference>
<dbReference type="PROSITE" id="PS51918">
    <property type="entry name" value="RADICAL_SAM"/>
    <property type="match status" value="1"/>
</dbReference>
<feature type="chain" id="PRO_0000076397" description="UPF0313 protein TM_0337">
    <location>
        <begin position="1"/>
        <end position="567"/>
    </location>
</feature>
<feature type="domain" description="Radical SAM core" evidence="2">
    <location>
        <begin position="288"/>
        <end position="560"/>
    </location>
</feature>
<feature type="binding site" evidence="1">
    <location>
        <position position="303"/>
    </location>
    <ligand>
        <name>[4Fe-4S] cluster</name>
        <dbReference type="ChEBI" id="CHEBI:49883"/>
        <note>4Fe-4S-S-AdoMet</note>
    </ligand>
</feature>
<feature type="binding site" evidence="1">
    <location>
        <position position="307"/>
    </location>
    <ligand>
        <name>[4Fe-4S] cluster</name>
        <dbReference type="ChEBI" id="CHEBI:49883"/>
        <note>4Fe-4S-S-AdoMet</note>
    </ligand>
</feature>
<feature type="binding site" evidence="1">
    <location>
        <position position="310"/>
    </location>
    <ligand>
        <name>[4Fe-4S] cluster</name>
        <dbReference type="ChEBI" id="CHEBI:49883"/>
        <note>4Fe-4S-S-AdoMet</note>
    </ligand>
</feature>
<accession>Q9WYH2</accession>
<proteinExistence type="inferred from homology"/>
<reference key="1">
    <citation type="journal article" date="1999" name="Nature">
        <title>Evidence for lateral gene transfer between Archaea and Bacteria from genome sequence of Thermotoga maritima.</title>
        <authorList>
            <person name="Nelson K.E."/>
            <person name="Clayton R.A."/>
            <person name="Gill S.R."/>
            <person name="Gwinn M.L."/>
            <person name="Dodson R.J."/>
            <person name="Haft D.H."/>
            <person name="Hickey E.K."/>
            <person name="Peterson J.D."/>
            <person name="Nelson W.C."/>
            <person name="Ketchum K.A."/>
            <person name="McDonald L.A."/>
            <person name="Utterback T.R."/>
            <person name="Malek J.A."/>
            <person name="Linher K.D."/>
            <person name="Garrett M.M."/>
            <person name="Stewart A.M."/>
            <person name="Cotton M.D."/>
            <person name="Pratt M.S."/>
            <person name="Phillips C.A."/>
            <person name="Richardson D.L."/>
            <person name="Heidelberg J.F."/>
            <person name="Sutton G.G."/>
            <person name="Fleischmann R.D."/>
            <person name="Eisen J.A."/>
            <person name="White O."/>
            <person name="Salzberg S.L."/>
            <person name="Smith H.O."/>
            <person name="Venter J.C."/>
            <person name="Fraser C.M."/>
        </authorList>
    </citation>
    <scope>NUCLEOTIDE SEQUENCE [LARGE SCALE GENOMIC DNA]</scope>
    <source>
        <strain>ATCC 43589 / DSM 3109 / JCM 10099 / NBRC 100826 / MSB8</strain>
    </source>
</reference>
<protein>
    <recommendedName>
        <fullName evidence="1">UPF0313 protein TM_0337</fullName>
    </recommendedName>
</protein>
<keyword id="KW-0004">4Fe-4S</keyword>
<keyword id="KW-0408">Iron</keyword>
<keyword id="KW-0411">Iron-sulfur</keyword>
<keyword id="KW-0479">Metal-binding</keyword>
<keyword id="KW-1185">Reference proteome</keyword>
<keyword id="KW-0949">S-adenosyl-L-methionine</keyword>
<organism>
    <name type="scientific">Thermotoga maritima (strain ATCC 43589 / DSM 3109 / JCM 10099 / NBRC 100826 / MSB8)</name>
    <dbReference type="NCBI Taxonomy" id="243274"/>
    <lineage>
        <taxon>Bacteria</taxon>
        <taxon>Thermotogati</taxon>
        <taxon>Thermotogota</taxon>
        <taxon>Thermotogae</taxon>
        <taxon>Thermotogales</taxon>
        <taxon>Thermotogaceae</taxon>
        <taxon>Thermotoga</taxon>
    </lineage>
</organism>